<organism>
    <name type="scientific">Rickettsia felis (strain ATCC VR-1525 / URRWXCal2)</name>
    <name type="common">Rickettsia azadi</name>
    <dbReference type="NCBI Taxonomy" id="315456"/>
    <lineage>
        <taxon>Bacteria</taxon>
        <taxon>Pseudomonadati</taxon>
        <taxon>Pseudomonadota</taxon>
        <taxon>Alphaproteobacteria</taxon>
        <taxon>Rickettsiales</taxon>
        <taxon>Rickettsiaceae</taxon>
        <taxon>Rickettsieae</taxon>
        <taxon>Rickettsia</taxon>
        <taxon>spotted fever group</taxon>
    </lineage>
</organism>
<gene>
    <name evidence="1" type="primary">rpoC</name>
    <name type="ordered locus">RF_1145</name>
</gene>
<dbReference type="EC" id="2.7.7.6" evidence="1"/>
<dbReference type="EMBL" id="CP000053">
    <property type="protein sequence ID" value="AAY61996.1"/>
    <property type="molecule type" value="Genomic_DNA"/>
</dbReference>
<dbReference type="SMR" id="Q4UKD5"/>
<dbReference type="STRING" id="315456.RF_1145"/>
<dbReference type="KEGG" id="rfe:RF_1145"/>
<dbReference type="eggNOG" id="COG0086">
    <property type="taxonomic scope" value="Bacteria"/>
</dbReference>
<dbReference type="HOGENOM" id="CLU_000524_3_1_5"/>
<dbReference type="OrthoDB" id="9815296at2"/>
<dbReference type="Proteomes" id="UP000008548">
    <property type="component" value="Chromosome"/>
</dbReference>
<dbReference type="GO" id="GO:0000428">
    <property type="term" value="C:DNA-directed RNA polymerase complex"/>
    <property type="evidence" value="ECO:0007669"/>
    <property type="project" value="UniProtKB-KW"/>
</dbReference>
<dbReference type="GO" id="GO:0003677">
    <property type="term" value="F:DNA binding"/>
    <property type="evidence" value="ECO:0007669"/>
    <property type="project" value="UniProtKB-UniRule"/>
</dbReference>
<dbReference type="GO" id="GO:0003899">
    <property type="term" value="F:DNA-directed RNA polymerase activity"/>
    <property type="evidence" value="ECO:0007669"/>
    <property type="project" value="UniProtKB-UniRule"/>
</dbReference>
<dbReference type="GO" id="GO:0000287">
    <property type="term" value="F:magnesium ion binding"/>
    <property type="evidence" value="ECO:0007669"/>
    <property type="project" value="UniProtKB-UniRule"/>
</dbReference>
<dbReference type="GO" id="GO:0008270">
    <property type="term" value="F:zinc ion binding"/>
    <property type="evidence" value="ECO:0007669"/>
    <property type="project" value="UniProtKB-UniRule"/>
</dbReference>
<dbReference type="GO" id="GO:0006351">
    <property type="term" value="P:DNA-templated transcription"/>
    <property type="evidence" value="ECO:0007669"/>
    <property type="project" value="UniProtKB-UniRule"/>
</dbReference>
<dbReference type="CDD" id="cd02655">
    <property type="entry name" value="RNAP_beta'_C"/>
    <property type="match status" value="1"/>
</dbReference>
<dbReference type="CDD" id="cd01609">
    <property type="entry name" value="RNAP_beta'_N"/>
    <property type="match status" value="1"/>
</dbReference>
<dbReference type="FunFam" id="1.10.150.390:FF:000002">
    <property type="entry name" value="DNA-directed RNA polymerase subunit beta"/>
    <property type="match status" value="1"/>
</dbReference>
<dbReference type="Gene3D" id="1.10.132.30">
    <property type="match status" value="1"/>
</dbReference>
<dbReference type="Gene3D" id="1.10.150.390">
    <property type="match status" value="1"/>
</dbReference>
<dbReference type="Gene3D" id="1.10.1790.20">
    <property type="match status" value="1"/>
</dbReference>
<dbReference type="Gene3D" id="1.10.40.90">
    <property type="match status" value="1"/>
</dbReference>
<dbReference type="Gene3D" id="2.40.40.20">
    <property type="match status" value="1"/>
</dbReference>
<dbReference type="Gene3D" id="2.40.50.100">
    <property type="match status" value="3"/>
</dbReference>
<dbReference type="Gene3D" id="4.10.860.120">
    <property type="entry name" value="RNA polymerase II, clamp domain"/>
    <property type="match status" value="1"/>
</dbReference>
<dbReference type="Gene3D" id="1.10.274.100">
    <property type="entry name" value="RNA polymerase Rpb1, domain 3"/>
    <property type="match status" value="2"/>
</dbReference>
<dbReference type="HAMAP" id="MF_01322">
    <property type="entry name" value="RNApol_bact_RpoC"/>
    <property type="match status" value="1"/>
</dbReference>
<dbReference type="InterPro" id="IPR045867">
    <property type="entry name" value="DNA-dir_RpoC_beta_prime"/>
</dbReference>
<dbReference type="InterPro" id="IPR012754">
    <property type="entry name" value="DNA-dir_RpoC_beta_prime_bact"/>
</dbReference>
<dbReference type="InterPro" id="IPR000722">
    <property type="entry name" value="RNA_pol_asu"/>
</dbReference>
<dbReference type="InterPro" id="IPR006592">
    <property type="entry name" value="RNA_pol_N"/>
</dbReference>
<dbReference type="InterPro" id="IPR007080">
    <property type="entry name" value="RNA_pol_Rpb1_1"/>
</dbReference>
<dbReference type="InterPro" id="IPR007066">
    <property type="entry name" value="RNA_pol_Rpb1_3"/>
</dbReference>
<dbReference type="InterPro" id="IPR042102">
    <property type="entry name" value="RNA_pol_Rpb1_3_sf"/>
</dbReference>
<dbReference type="InterPro" id="IPR007083">
    <property type="entry name" value="RNA_pol_Rpb1_4"/>
</dbReference>
<dbReference type="InterPro" id="IPR007081">
    <property type="entry name" value="RNA_pol_Rpb1_5"/>
</dbReference>
<dbReference type="InterPro" id="IPR044893">
    <property type="entry name" value="RNA_pol_Rpb1_clamp_domain"/>
</dbReference>
<dbReference type="InterPro" id="IPR038120">
    <property type="entry name" value="Rpb1_funnel_sf"/>
</dbReference>
<dbReference type="NCBIfam" id="TIGR02386">
    <property type="entry name" value="rpoC_TIGR"/>
    <property type="match status" value="1"/>
</dbReference>
<dbReference type="PANTHER" id="PTHR19376">
    <property type="entry name" value="DNA-DIRECTED RNA POLYMERASE"/>
    <property type="match status" value="1"/>
</dbReference>
<dbReference type="PANTHER" id="PTHR19376:SF54">
    <property type="entry name" value="DNA-DIRECTED RNA POLYMERASE SUBUNIT BETA"/>
    <property type="match status" value="1"/>
</dbReference>
<dbReference type="Pfam" id="PF04997">
    <property type="entry name" value="RNA_pol_Rpb1_1"/>
    <property type="match status" value="1"/>
</dbReference>
<dbReference type="Pfam" id="PF00623">
    <property type="entry name" value="RNA_pol_Rpb1_2"/>
    <property type="match status" value="2"/>
</dbReference>
<dbReference type="Pfam" id="PF04983">
    <property type="entry name" value="RNA_pol_Rpb1_3"/>
    <property type="match status" value="1"/>
</dbReference>
<dbReference type="Pfam" id="PF05000">
    <property type="entry name" value="RNA_pol_Rpb1_4"/>
    <property type="match status" value="1"/>
</dbReference>
<dbReference type="Pfam" id="PF04998">
    <property type="entry name" value="RNA_pol_Rpb1_5"/>
    <property type="match status" value="1"/>
</dbReference>
<dbReference type="SMART" id="SM00663">
    <property type="entry name" value="RPOLA_N"/>
    <property type="match status" value="1"/>
</dbReference>
<dbReference type="SUPFAM" id="SSF64484">
    <property type="entry name" value="beta and beta-prime subunits of DNA dependent RNA-polymerase"/>
    <property type="match status" value="1"/>
</dbReference>
<sequence>MSVVNFYGQLSNTQQFDQIRINIASPDQVRSWSFGEVTKPETINYRTFKPEKDGLFCARIFGPVKDYECLCGKYKRMKNRGITCEKCGVEVTVSRVRRERMGHIELAAPVAHIWFLKSLPSRISTLLDMTMRDVEKILYFENYVVVDPGLSILQKGELLTEEELQKAKDKYGEDAFTASIGAEVIQQMLKEIDFLKLKQELYEELQTTSSEVKKKKLVKRLKLVEDFLESENKPEWMIMDVLPVIPPEIRPLVMLDGGRFATSDLNELYRRVINRNNRLKKLIESKAPDIIVRNEKRMLQEAVDALFDNGRRGRAAKNANKRPFKSLSDMLKGKQGRFRQNLLGKRVDYSGRSVIVVGSELKLHQCGLPKKMALELFKPFIYSKLELYGIATTIKAAKRMVEAEKPEVWDVLEEVIREHPVLLNRAPTLHRLGIQAFEPLLIEGKAIQLYPLVCAAFNADFDGDQMAVHIPLSIEAQLEARVFMMSTNNILSPANGRPIIVPDKDIVLGLYYLTLAFDNEVGEGMMFSDLAEMEHALYNKFITIHTKIKYRRNQLNAEGKMVPVIIDTTYGRLMVGELLPSNPNIEFKFINKQLTKKDISLVIDLVYRHCGQKATVIFADQLMKLGFKYACSSGISFGMDDMVVPESKSTHINETQLEIKEFEQQYSNGLITYGEKYNKVVDAWSRCTDRVANDMMKEIATPPVSDDPNHQKINAIYMMAISGARGSFQQIKQLGGMRGLMTKSNGQIIQTPIISNFKEGLTEFECFNSANGMRKGQIDTALKTASSGYLTRKLVDVAQDCIITEKDCGTDKGIEVKSVIEGGEVIVPLAEKILGRTAAIDIFHPVTNDLILNKGELINEAKLEQIESAGLDRIMIKSVLTCESTTGICSICYGRDLATGTLVSEGEAIGVIAAQSIGEPGTQLTMRTFHIGGAATKGAEVSSVEASYDAKVKIISRNVVINSEERKIVMSRNCELLLLDNNGNEKARHKIPYGARLLVDDGDMVIKTQKLAEWDPYTIPIITEKSGKVLFKDMVEGISIRDVTDEATGIPSKVIIESKQYSRGAELRPRIQLLDAKGEVIALSNGLEARYYLPVGAVLSVEDGVQISVGDIIARIPKESTTTKDITGGLPRVAELVEARRPKDHAVIAEIDGRVEFGKDYKSKRRIIIHPIDETMSIEYMVPKGKHVVVNEGDFVKKGDLLIDGNPVLQDILKVMGVEVLANYIVKEVQAVYRLQGVKIDDKHIEVIIRQMLQKVEITDSGGTTLLAGEKIDRHEFEEINEKAIKNGLKPAEAQLILQGITKASLQTRSFISAASFQETTRVLTEAAIAGKIDKLRGLKENVIVGRLVPAGTGYFMDKMRKAAVKLDEENV</sequence>
<evidence type="ECO:0000255" key="1">
    <source>
        <dbReference type="HAMAP-Rule" id="MF_01322"/>
    </source>
</evidence>
<comment type="function">
    <text evidence="1">DNA-dependent RNA polymerase catalyzes the transcription of DNA into RNA using the four ribonucleoside triphosphates as substrates.</text>
</comment>
<comment type="catalytic activity">
    <reaction evidence="1">
        <text>RNA(n) + a ribonucleoside 5'-triphosphate = RNA(n+1) + diphosphate</text>
        <dbReference type="Rhea" id="RHEA:21248"/>
        <dbReference type="Rhea" id="RHEA-COMP:14527"/>
        <dbReference type="Rhea" id="RHEA-COMP:17342"/>
        <dbReference type="ChEBI" id="CHEBI:33019"/>
        <dbReference type="ChEBI" id="CHEBI:61557"/>
        <dbReference type="ChEBI" id="CHEBI:140395"/>
        <dbReference type="EC" id="2.7.7.6"/>
    </reaction>
</comment>
<comment type="cofactor">
    <cofactor evidence="1">
        <name>Mg(2+)</name>
        <dbReference type="ChEBI" id="CHEBI:18420"/>
    </cofactor>
    <text evidence="1">Binds 1 Mg(2+) ion per subunit.</text>
</comment>
<comment type="cofactor">
    <cofactor evidence="1">
        <name>Zn(2+)</name>
        <dbReference type="ChEBI" id="CHEBI:29105"/>
    </cofactor>
    <text evidence="1">Binds 2 Zn(2+) ions per subunit.</text>
</comment>
<comment type="subunit">
    <text evidence="1">The RNAP catalytic core consists of 2 alpha, 1 beta, 1 beta' and 1 omega subunit. When a sigma factor is associated with the core the holoenzyme is formed, which can initiate transcription.</text>
</comment>
<comment type="similarity">
    <text evidence="1">Belongs to the RNA polymerase beta' chain family.</text>
</comment>
<proteinExistence type="inferred from homology"/>
<reference key="1">
    <citation type="journal article" date="2005" name="PLoS Biol.">
        <title>The genome sequence of Rickettsia felis identifies the first putative conjugative plasmid in an obligate intracellular parasite.</title>
        <authorList>
            <person name="Ogata H."/>
            <person name="Renesto P."/>
            <person name="Audic S."/>
            <person name="Robert C."/>
            <person name="Blanc G."/>
            <person name="Fournier P.-E."/>
            <person name="Parinello H."/>
            <person name="Claverie J.-M."/>
            <person name="Raoult D."/>
        </authorList>
    </citation>
    <scope>NUCLEOTIDE SEQUENCE [LARGE SCALE GENOMIC DNA]</scope>
    <source>
        <strain>ATCC VR-1525 / URRWXCal2</strain>
    </source>
</reference>
<feature type="chain" id="PRO_0000225573" description="DNA-directed RNA polymerase subunit beta'">
    <location>
        <begin position="1"/>
        <end position="1372"/>
    </location>
</feature>
<feature type="binding site" evidence="1">
    <location>
        <position position="69"/>
    </location>
    <ligand>
        <name>Zn(2+)</name>
        <dbReference type="ChEBI" id="CHEBI:29105"/>
        <label>1</label>
    </ligand>
</feature>
<feature type="binding site" evidence="1">
    <location>
        <position position="71"/>
    </location>
    <ligand>
        <name>Zn(2+)</name>
        <dbReference type="ChEBI" id="CHEBI:29105"/>
        <label>1</label>
    </ligand>
</feature>
<feature type="binding site" evidence="1">
    <location>
        <position position="84"/>
    </location>
    <ligand>
        <name>Zn(2+)</name>
        <dbReference type="ChEBI" id="CHEBI:29105"/>
        <label>1</label>
    </ligand>
</feature>
<feature type="binding site" evidence="1">
    <location>
        <position position="87"/>
    </location>
    <ligand>
        <name>Zn(2+)</name>
        <dbReference type="ChEBI" id="CHEBI:29105"/>
        <label>1</label>
    </ligand>
</feature>
<feature type="binding site" evidence="1">
    <location>
        <position position="460"/>
    </location>
    <ligand>
        <name>Mg(2+)</name>
        <dbReference type="ChEBI" id="CHEBI:18420"/>
    </ligand>
</feature>
<feature type="binding site" evidence="1">
    <location>
        <position position="462"/>
    </location>
    <ligand>
        <name>Mg(2+)</name>
        <dbReference type="ChEBI" id="CHEBI:18420"/>
    </ligand>
</feature>
<feature type="binding site" evidence="1">
    <location>
        <position position="464"/>
    </location>
    <ligand>
        <name>Mg(2+)</name>
        <dbReference type="ChEBI" id="CHEBI:18420"/>
    </ligand>
</feature>
<feature type="binding site" evidence="1">
    <location>
        <position position="808"/>
    </location>
    <ligand>
        <name>Zn(2+)</name>
        <dbReference type="ChEBI" id="CHEBI:29105"/>
        <label>2</label>
    </ligand>
</feature>
<feature type="binding site" evidence="1">
    <location>
        <position position="882"/>
    </location>
    <ligand>
        <name>Zn(2+)</name>
        <dbReference type="ChEBI" id="CHEBI:29105"/>
        <label>2</label>
    </ligand>
</feature>
<feature type="binding site" evidence="1">
    <location>
        <position position="889"/>
    </location>
    <ligand>
        <name>Zn(2+)</name>
        <dbReference type="ChEBI" id="CHEBI:29105"/>
        <label>2</label>
    </ligand>
</feature>
<feature type="binding site" evidence="1">
    <location>
        <position position="892"/>
    </location>
    <ligand>
        <name>Zn(2+)</name>
        <dbReference type="ChEBI" id="CHEBI:29105"/>
        <label>2</label>
    </ligand>
</feature>
<name>RPOC_RICFE</name>
<protein>
    <recommendedName>
        <fullName evidence="1">DNA-directed RNA polymerase subunit beta'</fullName>
        <shortName evidence="1">RNAP subunit beta'</shortName>
        <ecNumber evidence="1">2.7.7.6</ecNumber>
    </recommendedName>
    <alternativeName>
        <fullName evidence="1">RNA polymerase subunit beta'</fullName>
    </alternativeName>
    <alternativeName>
        <fullName evidence="1">Transcriptase subunit beta'</fullName>
    </alternativeName>
</protein>
<keyword id="KW-0240">DNA-directed RNA polymerase</keyword>
<keyword id="KW-0460">Magnesium</keyword>
<keyword id="KW-0479">Metal-binding</keyword>
<keyword id="KW-0548">Nucleotidyltransferase</keyword>
<keyword id="KW-0804">Transcription</keyword>
<keyword id="KW-0808">Transferase</keyword>
<keyword id="KW-0862">Zinc</keyword>
<accession>Q4UKD5</accession>